<comment type="subcellular location">
    <subcellularLocation>
        <location>Cell outer membrane</location>
        <topology>Multi-pass membrane protein</topology>
    </subcellularLocation>
</comment>
<comment type="similarity">
    <text evidence="2">Belongs to the OmpP1/FadL family.</text>
</comment>
<organism>
    <name type="scientific">Haemophilus influenzae (strain ATCC 51907 / DSM 11121 / KW20 / Rd)</name>
    <dbReference type="NCBI Taxonomy" id="71421"/>
    <lineage>
        <taxon>Bacteria</taxon>
        <taxon>Pseudomonadati</taxon>
        <taxon>Pseudomonadota</taxon>
        <taxon>Gammaproteobacteria</taxon>
        <taxon>Pasteurellales</taxon>
        <taxon>Pasteurellaceae</taxon>
        <taxon>Haemophilus</taxon>
    </lineage>
</organism>
<protein>
    <recommendedName>
        <fullName>Outer membrane protein P1</fullName>
        <shortName>OMP P1</shortName>
    </recommendedName>
</protein>
<dbReference type="EMBL" id="L42023">
    <property type="protein sequence ID" value="AAC22060.1"/>
    <property type="molecule type" value="Genomic_DNA"/>
</dbReference>
<dbReference type="PIR" id="F64065">
    <property type="entry name" value="F64065"/>
</dbReference>
<dbReference type="RefSeq" id="NP_438563.1">
    <property type="nucleotide sequence ID" value="NC_000907.1"/>
</dbReference>
<dbReference type="SMR" id="P43838"/>
<dbReference type="STRING" id="71421.HI_0401"/>
<dbReference type="TCDB" id="1.B.9.1.4">
    <property type="family name" value="the fadl outer membrane protein (fadl) family"/>
</dbReference>
<dbReference type="EnsemblBacteria" id="AAC22060">
    <property type="protein sequence ID" value="AAC22060"/>
    <property type="gene ID" value="HI_0401"/>
</dbReference>
<dbReference type="KEGG" id="hin:HI_0401"/>
<dbReference type="PATRIC" id="fig|71421.8.peg.420"/>
<dbReference type="eggNOG" id="COG2067">
    <property type="taxonomic scope" value="Bacteria"/>
</dbReference>
<dbReference type="HOGENOM" id="CLU_035981_0_0_6"/>
<dbReference type="OrthoDB" id="19849at2"/>
<dbReference type="PhylomeDB" id="P43838"/>
<dbReference type="BioCyc" id="HINF71421:G1GJ1-416-MONOMER"/>
<dbReference type="Proteomes" id="UP000000579">
    <property type="component" value="Chromosome"/>
</dbReference>
<dbReference type="GO" id="GO:0009279">
    <property type="term" value="C:cell outer membrane"/>
    <property type="evidence" value="ECO:0007669"/>
    <property type="project" value="UniProtKB-SubCell"/>
</dbReference>
<dbReference type="GO" id="GO:0015483">
    <property type="term" value="F:long-chain fatty acid transporting porin activity"/>
    <property type="evidence" value="ECO:0000318"/>
    <property type="project" value="GO_Central"/>
</dbReference>
<dbReference type="FunFam" id="2.40.160.60:FF:000009">
    <property type="entry name" value="Outer membrane protein P1"/>
    <property type="match status" value="1"/>
</dbReference>
<dbReference type="Gene3D" id="2.40.160.60">
    <property type="entry name" value="Outer membrane protein transport protein (OMPP1/FadL/TodX)"/>
    <property type="match status" value="1"/>
</dbReference>
<dbReference type="InterPro" id="IPR005017">
    <property type="entry name" value="OMPP1/FadL/TodX"/>
</dbReference>
<dbReference type="PANTHER" id="PTHR35093:SF3">
    <property type="entry name" value="LONG-CHAIN FATTY ACID TRANSPORT PROTEIN"/>
    <property type="match status" value="1"/>
</dbReference>
<dbReference type="PANTHER" id="PTHR35093">
    <property type="entry name" value="OUTER MEMBRANE PROTEIN NMB0088-RELATED"/>
    <property type="match status" value="1"/>
</dbReference>
<dbReference type="Pfam" id="PF03349">
    <property type="entry name" value="Toluene_X"/>
    <property type="match status" value="1"/>
</dbReference>
<dbReference type="SUPFAM" id="SSF56935">
    <property type="entry name" value="Porins"/>
    <property type="match status" value="1"/>
</dbReference>
<evidence type="ECO:0000250" key="1"/>
<evidence type="ECO:0000305" key="2"/>
<proteinExistence type="evidence at protein level"/>
<accession>P43838</accession>
<gene>
    <name type="primary">ompP1</name>
    <name type="ordered locus">HI_0401</name>
</gene>
<feature type="signal peptide" evidence="1">
    <location>
        <begin position="1"/>
        <end position="22"/>
    </location>
</feature>
<feature type="chain" id="PRO_0000025199" description="Outer membrane protein P1">
    <location>
        <begin position="23"/>
        <end position="459"/>
    </location>
</feature>
<name>OPP11_HAEIN</name>
<reference key="1">
    <citation type="journal article" date="1995" name="Science">
        <title>Whole-genome random sequencing and assembly of Haemophilus influenzae Rd.</title>
        <authorList>
            <person name="Fleischmann R.D."/>
            <person name="Adams M.D."/>
            <person name="White O."/>
            <person name="Clayton R.A."/>
            <person name="Kirkness E.F."/>
            <person name="Kerlavage A.R."/>
            <person name="Bult C.J."/>
            <person name="Tomb J.-F."/>
            <person name="Dougherty B.A."/>
            <person name="Merrick J.M."/>
            <person name="McKenney K."/>
            <person name="Sutton G.G."/>
            <person name="FitzHugh W."/>
            <person name="Fields C.A."/>
            <person name="Gocayne J.D."/>
            <person name="Scott J.D."/>
            <person name="Shirley R."/>
            <person name="Liu L.-I."/>
            <person name="Glodek A."/>
            <person name="Kelley J.M."/>
            <person name="Weidman J.F."/>
            <person name="Phillips C.A."/>
            <person name="Spriggs T."/>
            <person name="Hedblom E."/>
            <person name="Cotton M.D."/>
            <person name="Utterback T.R."/>
            <person name="Hanna M.C."/>
            <person name="Nguyen D.T."/>
            <person name="Saudek D.M."/>
            <person name="Brandon R.C."/>
            <person name="Fine L.D."/>
            <person name="Fritchman J.L."/>
            <person name="Fuhrmann J.L."/>
            <person name="Geoghagen N.S.M."/>
            <person name="Gnehm C.L."/>
            <person name="McDonald L.A."/>
            <person name="Small K.V."/>
            <person name="Fraser C.M."/>
            <person name="Smith H.O."/>
            <person name="Venter J.C."/>
        </authorList>
    </citation>
    <scope>NUCLEOTIDE SEQUENCE [LARGE SCALE GENOMIC DNA]</scope>
    <source>
        <strain>ATCC 51907 / DSM 11121 / KW20 / Rd</strain>
    </source>
</reference>
<reference key="2">
    <citation type="journal article" date="2000" name="Electrophoresis">
        <title>Two-dimensional map of the proteome of Haemophilus influenzae.</title>
        <authorList>
            <person name="Langen H."/>
            <person name="Takacs B."/>
            <person name="Evers S."/>
            <person name="Berndt P."/>
            <person name="Lahm H.W."/>
            <person name="Wipf B."/>
            <person name="Gray C."/>
            <person name="Fountoulakis M."/>
        </authorList>
    </citation>
    <scope>IDENTIFICATION BY MASS SPECTROMETRY</scope>
    <source>
        <strain>ATCC 51907 / DSM 11121 / KW20 / Rd</strain>
    </source>
</reference>
<sequence>MKKFNQSLLATAMLLAAGGANAAAFQLAEVSTSGLGRAYAGEAAIADNASVVATNPALMSLFKTAQFSTGGVYVDSRINMNGDVTSHATIITSSSGIKAIEGGSASARNVVPGAFVPNLYFVAPVNDKFALGAGMNVNFGLKSEYDDSYDAGIFGGKTDLSAINLNLSGAYRVTEGLSLGLGVNAVYAKAQVERNAGIIADSVKDNQVKTALTVQQEPLKFLDKYLPSKDTSVVSLQDRAAWGFGWNAGVMYQFNEANRIGLAYHSKVDIDFTDRTATSVEANVIKAGKKGDLTLTLPDYLELSGFHQLTDKLAVHYSYKYTHWSRLTKLNASFEDGKKAFDKELQYSNNSRVALGASYNLDEKLTLRAGIAYDQAASRHQRSAAIPDTDRTWYSLGATYKFTPNLSVDLGYAYLKGKKVHFKEVKTIGDERSLTLNTTANYTSQAHANLYGLNLNYSF</sequence>
<keyword id="KW-0998">Cell outer membrane</keyword>
<keyword id="KW-0472">Membrane</keyword>
<keyword id="KW-1185">Reference proteome</keyword>
<keyword id="KW-0732">Signal</keyword>
<keyword id="KW-0812">Transmembrane</keyword>
<keyword id="KW-1134">Transmembrane beta strand</keyword>